<evidence type="ECO:0000255" key="1">
    <source>
        <dbReference type="HAMAP-Rule" id="MF_00436"/>
    </source>
</evidence>
<evidence type="ECO:0000255" key="2">
    <source>
        <dbReference type="PROSITE-ProRule" id="PRU01346"/>
    </source>
</evidence>
<evidence type="ECO:0000256" key="3">
    <source>
        <dbReference type="SAM" id="MobiDB-lite"/>
    </source>
</evidence>
<proteinExistence type="inferred from homology"/>
<name>HFQ_YERPA</name>
<organism>
    <name type="scientific">Yersinia pestis bv. Antiqua (strain Antiqua)</name>
    <dbReference type="NCBI Taxonomy" id="360102"/>
    <lineage>
        <taxon>Bacteria</taxon>
        <taxon>Pseudomonadati</taxon>
        <taxon>Pseudomonadota</taxon>
        <taxon>Gammaproteobacteria</taxon>
        <taxon>Enterobacterales</taxon>
        <taxon>Yersiniaceae</taxon>
        <taxon>Yersinia</taxon>
    </lineage>
</organism>
<accession>Q1C100</accession>
<gene>
    <name evidence="1" type="primary">hfq</name>
    <name type="ordered locus">YPA_3911</name>
</gene>
<reference key="1">
    <citation type="journal article" date="2006" name="J. Bacteriol.">
        <title>Complete genome sequence of Yersinia pestis strains Antiqua and Nepal516: evidence of gene reduction in an emerging pathogen.</title>
        <authorList>
            <person name="Chain P.S.G."/>
            <person name="Hu P."/>
            <person name="Malfatti S.A."/>
            <person name="Radnedge L."/>
            <person name="Larimer F."/>
            <person name="Vergez L.M."/>
            <person name="Worsham P."/>
            <person name="Chu M.C."/>
            <person name="Andersen G.L."/>
        </authorList>
    </citation>
    <scope>NUCLEOTIDE SEQUENCE [LARGE SCALE GENOMIC DNA]</scope>
    <source>
        <strain>Antiqua</strain>
    </source>
</reference>
<comment type="function">
    <text evidence="1">RNA chaperone that binds small regulatory RNA (sRNAs) and mRNAs to facilitate mRNA translational regulation in response to envelope stress, environmental stress and changes in metabolite concentrations. Also binds with high specificity to tRNAs.</text>
</comment>
<comment type="subunit">
    <text evidence="1">Homohexamer.</text>
</comment>
<comment type="similarity">
    <text evidence="1">Belongs to the Hfq family.</text>
</comment>
<feature type="chain" id="PRO_0000265205" description="RNA-binding protein Hfq">
    <location>
        <begin position="1"/>
        <end position="101"/>
    </location>
</feature>
<feature type="domain" description="Sm" evidence="2">
    <location>
        <begin position="9"/>
        <end position="68"/>
    </location>
</feature>
<feature type="region of interest" description="Disordered" evidence="3">
    <location>
        <begin position="63"/>
        <end position="101"/>
    </location>
</feature>
<feature type="compositionally biased region" description="Polar residues" evidence="3">
    <location>
        <begin position="70"/>
        <end position="86"/>
    </location>
</feature>
<protein>
    <recommendedName>
        <fullName evidence="1">RNA-binding protein Hfq</fullName>
    </recommendedName>
</protein>
<dbReference type="EMBL" id="CP000308">
    <property type="protein sequence ID" value="ABG15872.1"/>
    <property type="molecule type" value="Genomic_DNA"/>
</dbReference>
<dbReference type="RefSeq" id="WP_002209151.1">
    <property type="nucleotide sequence ID" value="NZ_CP009906.1"/>
</dbReference>
<dbReference type="SMR" id="Q1C100"/>
<dbReference type="GeneID" id="58049160"/>
<dbReference type="KEGG" id="ypa:YPA_3911"/>
<dbReference type="Proteomes" id="UP000001971">
    <property type="component" value="Chromosome"/>
</dbReference>
<dbReference type="GO" id="GO:0005829">
    <property type="term" value="C:cytosol"/>
    <property type="evidence" value="ECO:0007669"/>
    <property type="project" value="TreeGrafter"/>
</dbReference>
<dbReference type="GO" id="GO:0003723">
    <property type="term" value="F:RNA binding"/>
    <property type="evidence" value="ECO:0007669"/>
    <property type="project" value="UniProtKB-UniRule"/>
</dbReference>
<dbReference type="GO" id="GO:0006355">
    <property type="term" value="P:regulation of DNA-templated transcription"/>
    <property type="evidence" value="ECO:0007669"/>
    <property type="project" value="InterPro"/>
</dbReference>
<dbReference type="GO" id="GO:0043487">
    <property type="term" value="P:regulation of RNA stability"/>
    <property type="evidence" value="ECO:0007669"/>
    <property type="project" value="TreeGrafter"/>
</dbReference>
<dbReference type="GO" id="GO:0045974">
    <property type="term" value="P:regulation of translation, ncRNA-mediated"/>
    <property type="evidence" value="ECO:0007669"/>
    <property type="project" value="TreeGrafter"/>
</dbReference>
<dbReference type="CDD" id="cd01716">
    <property type="entry name" value="Hfq"/>
    <property type="match status" value="1"/>
</dbReference>
<dbReference type="FunFam" id="2.30.30.100:FF:000001">
    <property type="entry name" value="RNA-binding protein Hfq"/>
    <property type="match status" value="1"/>
</dbReference>
<dbReference type="Gene3D" id="2.30.30.100">
    <property type="match status" value="1"/>
</dbReference>
<dbReference type="HAMAP" id="MF_00436">
    <property type="entry name" value="Hfq"/>
    <property type="match status" value="1"/>
</dbReference>
<dbReference type="InterPro" id="IPR005001">
    <property type="entry name" value="Hfq"/>
</dbReference>
<dbReference type="InterPro" id="IPR010920">
    <property type="entry name" value="LSM_dom_sf"/>
</dbReference>
<dbReference type="InterPro" id="IPR047575">
    <property type="entry name" value="Sm"/>
</dbReference>
<dbReference type="NCBIfam" id="TIGR02383">
    <property type="entry name" value="Hfq"/>
    <property type="match status" value="1"/>
</dbReference>
<dbReference type="NCBIfam" id="NF001602">
    <property type="entry name" value="PRK00395.1"/>
    <property type="match status" value="1"/>
</dbReference>
<dbReference type="PANTHER" id="PTHR34772">
    <property type="entry name" value="RNA-BINDING PROTEIN HFQ"/>
    <property type="match status" value="1"/>
</dbReference>
<dbReference type="PANTHER" id="PTHR34772:SF1">
    <property type="entry name" value="RNA-BINDING PROTEIN HFQ"/>
    <property type="match status" value="1"/>
</dbReference>
<dbReference type="Pfam" id="PF17209">
    <property type="entry name" value="Hfq"/>
    <property type="match status" value="1"/>
</dbReference>
<dbReference type="SUPFAM" id="SSF50182">
    <property type="entry name" value="Sm-like ribonucleoproteins"/>
    <property type="match status" value="1"/>
</dbReference>
<dbReference type="PROSITE" id="PS52002">
    <property type="entry name" value="SM"/>
    <property type="match status" value="1"/>
</dbReference>
<keyword id="KW-0694">RNA-binding</keyword>
<keyword id="KW-0346">Stress response</keyword>
<sequence length="101" mass="11130">MAKGQSLQDPFLNALRRERVPVSIYLVNGIKLQGQVESFDQFVILLKNTVSQMVYKHAISTVVPSRPVSHHSNTPSGSTNNYHGSNPSAPQQPQQDSDDAE</sequence>